<reference key="1">
    <citation type="journal article" date="1984" name="J. Biol. Chem.">
        <title>The organization and complete nucleotide sequence of the PstI restriction-modification system.</title>
        <authorList>
            <person name="Walder R.Y."/>
            <person name="Walder J.A."/>
            <person name="Donelson J.E."/>
        </authorList>
    </citation>
    <scope>NUCLEOTIDE SEQUENCE [GENOMIC DNA]</scope>
    <scope>PROTEIN SEQUENCE OF N-TERMINUS</scope>
    <scope>FUNCTION</scope>
    <source>
        <strain>164</strain>
    </source>
</reference>
<reference key="2">
    <citation type="journal article" date="2003" name="Nucleic Acids Res.">
        <title>A nomenclature for restriction enzymes, DNA methyltransferases, homing endonucleases and their genes.</title>
        <authorList>
            <person name="Roberts R.J."/>
            <person name="Belfort M."/>
            <person name="Bestor T."/>
            <person name="Bhagwat A.S."/>
            <person name="Bickle T.A."/>
            <person name="Bitinaite J."/>
            <person name="Blumenthal R.M."/>
            <person name="Degtyarev S.K."/>
            <person name="Dryden D.T."/>
            <person name="Dybvig K."/>
            <person name="Firman K."/>
            <person name="Gromova E.S."/>
            <person name="Gumport R.I."/>
            <person name="Halford S.E."/>
            <person name="Hattman S."/>
            <person name="Heitman J."/>
            <person name="Hornby D.P."/>
            <person name="Janulaitis A."/>
            <person name="Jeltsch A."/>
            <person name="Josephsen J."/>
            <person name="Kiss A."/>
            <person name="Klaenhammer T.R."/>
            <person name="Kobayashi I."/>
            <person name="Kong H."/>
            <person name="Krueger D.H."/>
            <person name="Lacks S."/>
            <person name="Marinus M.G."/>
            <person name="Miyahara M."/>
            <person name="Morgan R.D."/>
            <person name="Murray N.E."/>
            <person name="Nagaraja V."/>
            <person name="Piekarowicz A."/>
            <person name="Pingoud A."/>
            <person name="Raleigh E."/>
            <person name="Rao D.N."/>
            <person name="Reich N."/>
            <person name="Repin V.E."/>
            <person name="Selker E.U."/>
            <person name="Shaw P.C."/>
            <person name="Stein D.C."/>
            <person name="Stoddard B.L."/>
            <person name="Szybalski W."/>
            <person name="Trautner T.A."/>
            <person name="Van Etten J.L."/>
            <person name="Vitor J.M."/>
            <person name="Wilson G.G."/>
            <person name="Xu S.Y."/>
        </authorList>
    </citation>
    <scope>NOMENCLATURE</scope>
    <scope>SUBTYPE</scope>
</reference>
<dbReference type="EC" id="2.1.1.72"/>
<dbReference type="EMBL" id="K02081">
    <property type="protein sequence ID" value="AAA25672.1"/>
    <property type="molecule type" value="Genomic_DNA"/>
</dbReference>
<dbReference type="PIR" id="A00553">
    <property type="entry name" value="XYOFS"/>
</dbReference>
<dbReference type="SMR" id="P00474"/>
<dbReference type="PRO" id="PR:P00474"/>
<dbReference type="GO" id="GO:0003677">
    <property type="term" value="F:DNA binding"/>
    <property type="evidence" value="ECO:0007669"/>
    <property type="project" value="UniProtKB-KW"/>
</dbReference>
<dbReference type="GO" id="GO:0009007">
    <property type="term" value="F:site-specific DNA-methyltransferase (adenine-specific) activity"/>
    <property type="evidence" value="ECO:0007669"/>
    <property type="project" value="UniProtKB-EC"/>
</dbReference>
<dbReference type="GO" id="GO:0009307">
    <property type="term" value="P:DNA restriction-modification system"/>
    <property type="evidence" value="ECO:0007669"/>
    <property type="project" value="UniProtKB-KW"/>
</dbReference>
<dbReference type="GO" id="GO:0032259">
    <property type="term" value="P:methylation"/>
    <property type="evidence" value="ECO:0007669"/>
    <property type="project" value="UniProtKB-KW"/>
</dbReference>
<dbReference type="CDD" id="cd02440">
    <property type="entry name" value="AdoMet_MTases"/>
    <property type="match status" value="1"/>
</dbReference>
<dbReference type="Gene3D" id="3.40.50.150">
    <property type="entry name" value="Vaccinia Virus protein VP39"/>
    <property type="match status" value="1"/>
</dbReference>
<dbReference type="InterPro" id="IPR011639">
    <property type="entry name" value="MethylTrfase_TaqI-like_dom"/>
</dbReference>
<dbReference type="InterPro" id="IPR050953">
    <property type="entry name" value="N4_N6_ade-DNA_methylase"/>
</dbReference>
<dbReference type="InterPro" id="IPR029063">
    <property type="entry name" value="SAM-dependent_MTases_sf"/>
</dbReference>
<dbReference type="PANTHER" id="PTHR33841">
    <property type="entry name" value="DNA METHYLTRANSFERASE YEEA-RELATED"/>
    <property type="match status" value="1"/>
</dbReference>
<dbReference type="PANTHER" id="PTHR33841:SF6">
    <property type="entry name" value="TYPE II METHYLTRANSFERASE M.HINDII"/>
    <property type="match status" value="1"/>
</dbReference>
<dbReference type="Pfam" id="PF07669">
    <property type="entry name" value="Eco57I"/>
    <property type="match status" value="1"/>
</dbReference>
<dbReference type="PRINTS" id="PR00507">
    <property type="entry name" value="N12N6MTFRASE"/>
</dbReference>
<dbReference type="SUPFAM" id="SSF53335">
    <property type="entry name" value="S-adenosyl-L-methionine-dependent methyltransferases"/>
    <property type="match status" value="1"/>
</dbReference>
<dbReference type="PROSITE" id="PS00092">
    <property type="entry name" value="N6_MTASE"/>
    <property type="match status" value="1"/>
</dbReference>
<keyword id="KW-0903">Direct protein sequencing</keyword>
<keyword id="KW-0238">DNA-binding</keyword>
<keyword id="KW-0489">Methyltransferase</keyword>
<keyword id="KW-0680">Restriction system</keyword>
<keyword id="KW-0949">S-adenosyl-L-methionine</keyword>
<keyword id="KW-0808">Transferase</keyword>
<feature type="chain" id="PRO_0000087978" description="Type II methyltransferase M.PstI">
    <location>
        <begin position="1"/>
        <end position="507"/>
    </location>
</feature>
<comment type="function">
    <text evidence="1 2">A gamma subtype methylase that recognizes the double-stranded sequence 5'-CTGCAG-3', methylates A-5 on both strands, and protects the DNA from cleavage by the PstI endonuclease.</text>
</comment>
<comment type="catalytic activity">
    <reaction>
        <text>a 2'-deoxyadenosine in DNA + S-adenosyl-L-methionine = an N(6)-methyl-2'-deoxyadenosine in DNA + S-adenosyl-L-homocysteine + H(+)</text>
        <dbReference type="Rhea" id="RHEA:15197"/>
        <dbReference type="Rhea" id="RHEA-COMP:12418"/>
        <dbReference type="Rhea" id="RHEA-COMP:12419"/>
        <dbReference type="ChEBI" id="CHEBI:15378"/>
        <dbReference type="ChEBI" id="CHEBI:57856"/>
        <dbReference type="ChEBI" id="CHEBI:59789"/>
        <dbReference type="ChEBI" id="CHEBI:90615"/>
        <dbReference type="ChEBI" id="CHEBI:90616"/>
        <dbReference type="EC" id="2.1.1.72"/>
    </reaction>
</comment>
<comment type="subunit">
    <text>Monomer.</text>
</comment>
<comment type="similarity">
    <text evidence="3">Belongs to the N(4)/N(6)-methyltransferase family.</text>
</comment>
<gene>
    <name type="primary">pstIM</name>
</gene>
<protein>
    <recommendedName>
        <fullName evidence="2">Type II methyltransferase M.PstI</fullName>
        <shortName evidence="2">M.PstI</shortName>
        <ecNumber>2.1.1.72</ecNumber>
    </recommendedName>
    <alternativeName>
        <fullName>Adenine-specific methyltransferase PstI</fullName>
    </alternativeName>
    <alternativeName>
        <fullName>Modification methylase PstI</fullName>
    </alternativeName>
</protein>
<proteinExistence type="evidence at protein level"/>
<sequence length="507" mass="56877">MTEAATQLPISLNILVDSIREAANSTLDETLRSKLGQFMSSSAVSELMANLFESYVGEHEILDAGAGVGSLTAAFVQNATLNGAKSISSTCYEISEVMVYNLIQVLDLCKIRAMEFEVNWQQKIIESDFIQASVEQLLIENYSPKYNKAILNPPYLKIAAKGRERALLQKVGIEASNLYSAFVALAIKQLKSGGELVAITPRSFCNGPYFNDFRKQMLDECSLNKIHVFNSRKSAFKADNVLQENIIYHLTKGETQRKVVTVYSSTCANDINPTIFEVPFDEIVKSNNPDLFIHIVTNEQERELANKAGGLPCSLSDLGIQVSTGKVVDFRTRENLSMEYISNSVPLIFPQHLQRCSIVWPITKAKKPNALIVNEATNNLMVPNGIYVLTRRLTAKEEKRRIVASIYYPDIANVDTVGFDNKINYFHANGKPLDISLAKGLWVFLNSTLIDKYFRQMNGHTQVNATDLRALRYPTREQLEDIANQVDFGEFEQTKIDEIINQSLQLM</sequence>
<organism>
    <name type="scientific">Providencia stuartii</name>
    <dbReference type="NCBI Taxonomy" id="588"/>
    <lineage>
        <taxon>Bacteria</taxon>
        <taxon>Pseudomonadati</taxon>
        <taxon>Pseudomonadota</taxon>
        <taxon>Gammaproteobacteria</taxon>
        <taxon>Enterobacterales</taxon>
        <taxon>Morganellaceae</taxon>
        <taxon>Providencia</taxon>
    </lineage>
</organism>
<name>MTPS_PROST</name>
<evidence type="ECO:0000269" key="1">
    <source>
    </source>
</evidence>
<evidence type="ECO:0000303" key="2">
    <source>
    </source>
</evidence>
<evidence type="ECO:0000305" key="3"/>
<accession>P00474</accession>